<keyword id="KW-0002">3D-structure</keyword>
<keyword id="KW-0010">Activator</keyword>
<keyword id="KW-0015">Albinism</keyword>
<keyword id="KW-0025">Alternative splicing</keyword>
<keyword id="KW-0175">Coiled coil</keyword>
<keyword id="KW-0963">Cytoplasm</keyword>
<keyword id="KW-0209">Deafness</keyword>
<keyword id="KW-0217">Developmental protein</keyword>
<keyword id="KW-0225">Disease variant</keyword>
<keyword id="KW-0238">DNA-binding</keyword>
<keyword id="KW-1017">Isopeptide bond</keyword>
<keyword id="KW-0458">Lysosome</keyword>
<keyword id="KW-0472">Membrane</keyword>
<keyword id="KW-1013">Microphthalmia</keyword>
<keyword id="KW-0539">Nucleus</keyword>
<keyword id="KW-0987">Osteopetrosis</keyword>
<keyword id="KW-0597">Phosphoprotein</keyword>
<keyword id="KW-1267">Proteomics identification</keyword>
<keyword id="KW-1185">Reference proteome</keyword>
<keyword id="KW-0804">Transcription</keyword>
<keyword id="KW-0805">Transcription regulation</keyword>
<keyword id="KW-0832">Ubl conjugation</keyword>
<keyword id="KW-0897">Waardenburg syndrome</keyword>
<accession>O75030</accession>
<accession>B4DJL2</accession>
<accession>D3K197</accession>
<accession>E9PFN0</accession>
<accession>Q14841</accession>
<accession>Q9P2V0</accession>
<accession>Q9P2V1</accession>
<accession>Q9P2V2</accession>
<accession>Q9P2Y8</accession>
<sequence>MQSESGIVPDFEVGEEFHEEPKTYYELKSQPLKSSSSAEHPGASKPPISSSSMTSRILLRQQLMREQMQEQERREQQQKLQAAQFMQQRVPVSQTPAINVSVPTTLPSATQVPMEVLKVQTHLENPTKYHIQQAQRQQVKQYLSTTLANKHANQVLSLPCPNQPGDHVMPPVPGSSAPNSPMAMLTLNSNCEKEGFYKFEEQNRAESECPGMNTHSRASCMQMDDVIDDIISLESSYNEEILGLMDPALQMANTLPVSGNLIDLYGNQGLPPPGLTISNSCPANLPNIKRELTACIFPTESEARALAKERQKKDNHNLIERRRRFNINDRIKELGTLIPKSNDPDMRWNKGTILKASVDYIRKLQREQQRAKELENRQKKLEHANRHLLLRIQELEMQARAHGLSLIPSTGLCSPDLVNRIIKQEPVLENCSQDLLQHHADLTCTTTLDLTDGTITFNNNLGTGTEANQAYSVPTKMGSKLEDILMDDTLSPVGVTDPLLSSVSPGASKTSSRRSSMSMEETEHTC</sequence>
<proteinExistence type="evidence at protein level"/>
<dbReference type="EMBL" id="AB006909">
    <property type="protein sequence ID" value="BAA32288.1"/>
    <property type="molecule type" value="mRNA"/>
</dbReference>
<dbReference type="EMBL" id="AB006989">
    <property type="status" value="NOT_ANNOTATED_CDS"/>
    <property type="molecule type" value="mRNA"/>
</dbReference>
<dbReference type="EMBL" id="Z29678">
    <property type="protein sequence ID" value="CAA82775.1"/>
    <property type="molecule type" value="mRNA"/>
</dbReference>
<dbReference type="EMBL" id="GU355676">
    <property type="protein sequence ID" value="ADB90411.1"/>
    <property type="molecule type" value="mRNA"/>
</dbReference>
<dbReference type="EMBL" id="AL110195">
    <property type="protein sequence ID" value="CAB53672.1"/>
    <property type="molecule type" value="mRNA"/>
</dbReference>
<dbReference type="EMBL" id="AK296129">
    <property type="protein sequence ID" value="BAG58874.1"/>
    <property type="molecule type" value="mRNA"/>
</dbReference>
<dbReference type="EMBL" id="AC099326">
    <property type="status" value="NOT_ANNOTATED_CDS"/>
    <property type="molecule type" value="Genomic_DNA"/>
</dbReference>
<dbReference type="EMBL" id="AC104445">
    <property type="status" value="NOT_ANNOTATED_CDS"/>
    <property type="molecule type" value="Genomic_DNA"/>
</dbReference>
<dbReference type="EMBL" id="AC104449">
    <property type="status" value="NOT_ANNOTATED_CDS"/>
    <property type="molecule type" value="Genomic_DNA"/>
</dbReference>
<dbReference type="EMBL" id="AC124915">
    <property type="status" value="NOT_ANNOTATED_CDS"/>
    <property type="molecule type" value="Genomic_DNA"/>
</dbReference>
<dbReference type="EMBL" id="BC026961">
    <property type="protein sequence ID" value="AAH26961.1"/>
    <property type="molecule type" value="mRNA"/>
</dbReference>
<dbReference type="EMBL" id="BC065243">
    <property type="protein sequence ID" value="AAH65243.1"/>
    <property type="molecule type" value="mRNA"/>
</dbReference>
<dbReference type="EMBL" id="AF034755">
    <property type="protein sequence ID" value="AAC39639.1"/>
    <property type="molecule type" value="Genomic_DNA"/>
</dbReference>
<dbReference type="EMBL" id="AB032359">
    <property type="protein sequence ID" value="BAA95208.1"/>
    <property type="molecule type" value="Genomic_DNA"/>
</dbReference>
<dbReference type="EMBL" id="AB032358">
    <property type="protein sequence ID" value="BAA95207.1"/>
    <property type="molecule type" value="Genomic_DNA"/>
</dbReference>
<dbReference type="EMBL" id="AB032357">
    <property type="protein sequence ID" value="BAA95206.1"/>
    <property type="molecule type" value="Genomic_DNA"/>
</dbReference>
<dbReference type="EMBL" id="AB009608">
    <property type="protein sequence ID" value="BAA95209.1"/>
    <property type="status" value="ALT_TERM"/>
    <property type="molecule type" value="Genomic_DNA"/>
</dbReference>
<dbReference type="CCDS" id="CCDS2913.1">
    <molecule id="O75030-9"/>
</dbReference>
<dbReference type="CCDS" id="CCDS43106.1">
    <molecule id="O75030-2"/>
</dbReference>
<dbReference type="CCDS" id="CCDS43107.1">
    <molecule id="O75030-10"/>
</dbReference>
<dbReference type="CCDS" id="CCDS46865.1">
    <molecule id="O75030-8"/>
</dbReference>
<dbReference type="CCDS" id="CCDS46866.2">
    <molecule id="O75030-11"/>
</dbReference>
<dbReference type="CCDS" id="CCDS54607.1">
    <molecule id="O75030-12"/>
</dbReference>
<dbReference type="CCDS" id="CCDS87108.1">
    <molecule id="O75030-1"/>
</dbReference>
<dbReference type="PIR" id="I38024">
    <property type="entry name" value="I38024"/>
</dbReference>
<dbReference type="PIR" id="T14752">
    <property type="entry name" value="T14752"/>
</dbReference>
<dbReference type="RefSeq" id="NP_000239.1">
    <molecule id="O75030-9"/>
    <property type="nucleotide sequence ID" value="NM_000248.4"/>
</dbReference>
<dbReference type="RefSeq" id="NP_001171896.1">
    <molecule id="O75030-12"/>
    <property type="nucleotide sequence ID" value="NM_001184967.2"/>
</dbReference>
<dbReference type="RefSeq" id="NP_001341533.1">
    <molecule id="O75030-1"/>
    <property type="nucleotide sequence ID" value="NM_001354604.2"/>
</dbReference>
<dbReference type="RefSeq" id="NP_001341537.1">
    <molecule id="O75030-12"/>
    <property type="nucleotide sequence ID" value="NM_001354608.2"/>
</dbReference>
<dbReference type="RefSeq" id="NP_006713.1">
    <molecule id="O75030-6"/>
    <property type="nucleotide sequence ID" value="NM_006722.3"/>
</dbReference>
<dbReference type="RefSeq" id="NP_937801.1">
    <molecule id="O75030-10"/>
    <property type="nucleotide sequence ID" value="NM_198158.3"/>
</dbReference>
<dbReference type="RefSeq" id="NP_937802.1">
    <molecule id="O75030-2"/>
    <property type="nucleotide sequence ID" value="NM_198159.3"/>
</dbReference>
<dbReference type="RefSeq" id="NP_937820.1">
    <molecule id="O75030-8"/>
    <property type="nucleotide sequence ID" value="NM_198177.3"/>
</dbReference>
<dbReference type="RefSeq" id="NP_937821.2">
    <molecule id="O75030-11"/>
    <property type="nucleotide sequence ID" value="NM_198178.3"/>
</dbReference>
<dbReference type="RefSeq" id="XP_005264811.1">
    <property type="nucleotide sequence ID" value="XM_005264754.1"/>
</dbReference>
<dbReference type="RefSeq" id="XP_005264812.1">
    <property type="nucleotide sequence ID" value="XM_005264755.3"/>
</dbReference>
<dbReference type="RefSeq" id="XP_016861933.1">
    <property type="nucleotide sequence ID" value="XM_017006444.1"/>
</dbReference>
<dbReference type="RefSeq" id="XP_016861937.1">
    <property type="nucleotide sequence ID" value="XM_017006448.1"/>
</dbReference>
<dbReference type="PDB" id="4C7N">
    <property type="method" value="X-ray"/>
    <property type="resolution" value="2.10 A"/>
    <property type="chains" value="A=357-403"/>
</dbReference>
<dbReference type="PDB" id="7D8R">
    <property type="method" value="X-ray"/>
    <property type="resolution" value="3.00 A"/>
    <property type="chains" value="A/B/C/D=324-395"/>
</dbReference>
<dbReference type="PDB" id="7D8S">
    <property type="method" value="X-ray"/>
    <property type="resolution" value="2.28 A"/>
    <property type="chains" value="A/B/C/D=306-395"/>
</dbReference>
<dbReference type="PDB" id="7D8T">
    <property type="method" value="X-ray"/>
    <property type="resolution" value="3.20 A"/>
    <property type="chains" value="A/B=306-395"/>
</dbReference>
<dbReference type="PDB" id="7EOD">
    <property type="method" value="X-ray"/>
    <property type="resolution" value="1.90 A"/>
    <property type="chains" value="A/B/C/D=323-395"/>
</dbReference>
<dbReference type="PDB" id="8E1D">
    <property type="method" value="NMR"/>
    <property type="chains" value="B=216-248"/>
</dbReference>
<dbReference type="PDBsum" id="4C7N"/>
<dbReference type="PDBsum" id="7D8R"/>
<dbReference type="PDBsum" id="7D8S"/>
<dbReference type="PDBsum" id="7D8T"/>
<dbReference type="PDBsum" id="7EOD"/>
<dbReference type="PDBsum" id="8E1D"/>
<dbReference type="SMR" id="O75030"/>
<dbReference type="BioGRID" id="110432">
    <property type="interactions" value="51"/>
</dbReference>
<dbReference type="CORUM" id="O75030"/>
<dbReference type="DIP" id="DIP-59573N"/>
<dbReference type="FunCoup" id="O75030">
    <property type="interactions" value="2684"/>
</dbReference>
<dbReference type="IntAct" id="O75030">
    <property type="interactions" value="20"/>
</dbReference>
<dbReference type="MINT" id="O75030"/>
<dbReference type="STRING" id="9606.ENSP00000391803"/>
<dbReference type="ChEMBL" id="CHEMBL1741165"/>
<dbReference type="GlyGen" id="O75030">
    <property type="glycosylation" value="4 sites, 1 O-linked glycan (4 sites)"/>
</dbReference>
<dbReference type="iPTMnet" id="O75030"/>
<dbReference type="PhosphoSitePlus" id="O75030"/>
<dbReference type="BioMuta" id="MITF"/>
<dbReference type="jPOST" id="O75030"/>
<dbReference type="MassIVE" id="O75030"/>
<dbReference type="PaxDb" id="9606-ENSP00000295600"/>
<dbReference type="PeptideAtlas" id="O75030"/>
<dbReference type="ProteomicsDB" id="12779"/>
<dbReference type="ProteomicsDB" id="20138"/>
<dbReference type="ProteomicsDB" id="49704">
    <molecule id="O75030-1"/>
</dbReference>
<dbReference type="ProteomicsDB" id="49705">
    <molecule id="O75030-10"/>
</dbReference>
<dbReference type="ProteomicsDB" id="49706">
    <molecule id="O75030-2"/>
</dbReference>
<dbReference type="ProteomicsDB" id="49707">
    <molecule id="O75030-3"/>
</dbReference>
<dbReference type="ProteomicsDB" id="49708">
    <molecule id="O75030-4"/>
</dbReference>
<dbReference type="ProteomicsDB" id="49709">
    <molecule id="O75030-5"/>
</dbReference>
<dbReference type="ProteomicsDB" id="49710">
    <molecule id="O75030-6"/>
</dbReference>
<dbReference type="ProteomicsDB" id="49711">
    <molecule id="O75030-7"/>
</dbReference>
<dbReference type="ProteomicsDB" id="49712">
    <molecule id="O75030-8"/>
</dbReference>
<dbReference type="ProteomicsDB" id="49713">
    <molecule id="O75030-9"/>
</dbReference>
<dbReference type="Pumba" id="O75030"/>
<dbReference type="Antibodypedia" id="923">
    <property type="antibodies" value="951 antibodies from 46 providers"/>
</dbReference>
<dbReference type="DNASU" id="4286"/>
<dbReference type="Ensembl" id="ENST00000314557.10">
    <molecule id="O75030-10"/>
    <property type="protein sequence ID" value="ENSP00000324246.6"/>
    <property type="gene ID" value="ENSG00000187098.18"/>
</dbReference>
<dbReference type="Ensembl" id="ENST00000314589.11">
    <molecule id="O75030-8"/>
    <property type="protein sequence ID" value="ENSP00000324443.5"/>
    <property type="gene ID" value="ENSG00000187098.18"/>
</dbReference>
<dbReference type="Ensembl" id="ENST00000352241.9">
    <molecule id="O75030-1"/>
    <property type="protein sequence ID" value="ENSP00000295600.8"/>
    <property type="gene ID" value="ENSG00000187098.18"/>
</dbReference>
<dbReference type="Ensembl" id="ENST00000394351.9">
    <molecule id="O75030-9"/>
    <property type="protein sequence ID" value="ENSP00000377880.3"/>
    <property type="gene ID" value="ENSG00000187098.18"/>
</dbReference>
<dbReference type="Ensembl" id="ENST00000448226.9">
    <molecule id="O75030-6"/>
    <property type="protein sequence ID" value="ENSP00000391803.3"/>
    <property type="gene ID" value="ENSG00000187098.18"/>
</dbReference>
<dbReference type="Ensembl" id="ENST00000472437.5">
    <molecule id="O75030-12"/>
    <property type="protein sequence ID" value="ENSP00000418845.1"/>
    <property type="gene ID" value="ENSG00000187098.18"/>
</dbReference>
<dbReference type="Ensembl" id="ENST00000531774.1">
    <molecule id="O75030-11"/>
    <property type="protein sequence ID" value="ENSP00000435909.1"/>
    <property type="gene ID" value="ENSG00000187098.18"/>
</dbReference>
<dbReference type="Ensembl" id="ENST00000642352.1">
    <molecule id="O75030-2"/>
    <property type="protein sequence ID" value="ENSP00000494105.1"/>
    <property type="gene ID" value="ENSG00000187098.18"/>
</dbReference>
<dbReference type="GeneID" id="4286"/>
<dbReference type="KEGG" id="hsa:4286"/>
<dbReference type="MANE-Select" id="ENST00000352241.9">
    <property type="protein sequence ID" value="ENSP00000295600.8"/>
    <property type="RefSeq nucleotide sequence ID" value="NM_001354604.2"/>
    <property type="RefSeq protein sequence ID" value="NP_001341533.1"/>
</dbReference>
<dbReference type="UCSC" id="uc003dnz.4">
    <molecule id="O75030-1"/>
    <property type="organism name" value="human"/>
</dbReference>
<dbReference type="AGR" id="HGNC:7105"/>
<dbReference type="CTD" id="4286"/>
<dbReference type="DisGeNET" id="4286"/>
<dbReference type="GeneCards" id="MITF"/>
<dbReference type="HGNC" id="HGNC:7105">
    <property type="gene designation" value="MITF"/>
</dbReference>
<dbReference type="HPA" id="ENSG00000187098">
    <property type="expression patterns" value="Low tissue specificity"/>
</dbReference>
<dbReference type="MalaCards" id="MITF"/>
<dbReference type="MIM" id="103500">
    <property type="type" value="phenotype"/>
</dbReference>
<dbReference type="MIM" id="156845">
    <property type="type" value="gene"/>
</dbReference>
<dbReference type="MIM" id="193510">
    <property type="type" value="phenotype"/>
</dbReference>
<dbReference type="MIM" id="614456">
    <property type="type" value="phenotype"/>
</dbReference>
<dbReference type="MIM" id="617306">
    <property type="type" value="phenotype"/>
</dbReference>
<dbReference type="neXtProt" id="NX_O75030"/>
<dbReference type="OpenTargets" id="ENSG00000187098"/>
<dbReference type="Orphanet" id="404511">
    <property type="disease" value="Clear cell papillary renal cell carcinoma"/>
</dbReference>
<dbReference type="Orphanet" id="618">
    <property type="disease" value="Familial melanoma"/>
</dbReference>
<dbReference type="Orphanet" id="293822">
    <property type="disease" value="MITF-related melanoma and renal cell carcinoma predisposition syndrome"/>
</dbReference>
<dbReference type="Orphanet" id="319298">
    <property type="disease" value="Papillary renal cell carcinoma"/>
</dbReference>
<dbReference type="Orphanet" id="42665">
    <property type="disease" value="Tietz syndrome"/>
</dbReference>
<dbReference type="Orphanet" id="895">
    <property type="disease" value="Waardenburg syndrome type 2"/>
</dbReference>
<dbReference type="Orphanet" id="897">
    <property type="disease" value="Waardenburg-Shah syndrome"/>
</dbReference>
<dbReference type="PharmGKB" id="PA30823"/>
<dbReference type="VEuPathDB" id="HostDB:ENSG00000187098"/>
<dbReference type="eggNOG" id="KOG1318">
    <property type="taxonomic scope" value="Eukaryota"/>
</dbReference>
<dbReference type="GeneTree" id="ENSGT00940000156326"/>
<dbReference type="HOGENOM" id="CLU_031638_2_0_1"/>
<dbReference type="InParanoid" id="O75030"/>
<dbReference type="OMA" id="GIPMANT"/>
<dbReference type="OrthoDB" id="6242697at2759"/>
<dbReference type="PAN-GO" id="O75030">
    <property type="GO annotations" value="5 GO annotations based on evolutionary models"/>
</dbReference>
<dbReference type="PhylomeDB" id="O75030"/>
<dbReference type="TreeFam" id="TF317174"/>
<dbReference type="PathwayCommons" id="O75030"/>
<dbReference type="Reactome" id="R-HSA-3232118">
    <property type="pathway name" value="SUMOylation of transcription factors"/>
</dbReference>
<dbReference type="Reactome" id="R-HSA-9824585">
    <molecule id="O75030-9"/>
    <property type="pathway name" value="Regulation of MITF-M-dependent genes involved in pigmentation"/>
</dbReference>
<dbReference type="Reactome" id="R-HSA-9824594">
    <molecule id="O75030-9"/>
    <property type="pathway name" value="Regulation of MITF-M-dependent genes involved in apoptosis"/>
</dbReference>
<dbReference type="Reactome" id="R-HSA-9825892">
    <molecule id="O75030-9"/>
    <property type="pathway name" value="Regulation of MITF-M-dependent genes involved in cell cycle and proliferation"/>
</dbReference>
<dbReference type="Reactome" id="R-HSA-9825895">
    <molecule id="O75030-9"/>
    <property type="pathway name" value="Regulation of MITF-M-dependent genes involved in DNA replication, damage repair and senescence"/>
</dbReference>
<dbReference type="Reactome" id="R-HSA-9854907">
    <molecule id="O75030-9"/>
    <property type="pathway name" value="Regulation of MITF-M dependent genes involved in metabolism"/>
</dbReference>
<dbReference type="Reactome" id="R-HSA-9854909">
    <molecule id="O75030-9"/>
    <property type="pathway name" value="Regulation of MITF-M dependent genes involved in invasion"/>
</dbReference>
<dbReference type="Reactome" id="R-HSA-9856649">
    <property type="pathway name" value="Transcriptional and post-translational regulation of MITF-M expression and activity"/>
</dbReference>
<dbReference type="Reactome" id="R-HSA-9857377">
    <molecule id="O75030-9"/>
    <property type="pathway name" value="Regulation of MITF-M-dependent genes involved in lysosome biogenesis and autophagy"/>
</dbReference>
<dbReference type="Reactome" id="R-HSA-9926550">
    <molecule id="O75030-9"/>
    <property type="pathway name" value="Regulation of MITF-M-dependent genes involved in extracellular matrix, focal adhesion and epithelial-to-mesenchymal transition"/>
</dbReference>
<dbReference type="SignaLink" id="O75030"/>
<dbReference type="SIGNOR" id="O75030"/>
<dbReference type="BioGRID-ORCS" id="4286">
    <property type="hits" value="28 hits in 1188 CRISPR screens"/>
</dbReference>
<dbReference type="ChiTaRS" id="MITF">
    <property type="organism name" value="human"/>
</dbReference>
<dbReference type="EvolutionaryTrace" id="O75030"/>
<dbReference type="GeneWiki" id="Microphthalmia-associated_transcription_factor"/>
<dbReference type="GenomeRNAi" id="4286"/>
<dbReference type="Pharos" id="O75030">
    <property type="development level" value="Tchem"/>
</dbReference>
<dbReference type="PRO" id="PR:O75030"/>
<dbReference type="Proteomes" id="UP000005640">
    <property type="component" value="Chromosome 3"/>
</dbReference>
<dbReference type="RNAct" id="O75030">
    <property type="molecule type" value="protein"/>
</dbReference>
<dbReference type="Bgee" id="ENSG00000187098">
    <property type="expression patterns" value="Expressed in pigmented layer of retina and 210 other cell types or tissues"/>
</dbReference>
<dbReference type="ExpressionAtlas" id="O75030">
    <property type="expression patterns" value="baseline and differential"/>
</dbReference>
<dbReference type="GO" id="GO:0000785">
    <property type="term" value="C:chromatin"/>
    <property type="evidence" value="ECO:0000247"/>
    <property type="project" value="NTNU_SB"/>
</dbReference>
<dbReference type="GO" id="GO:0005737">
    <property type="term" value="C:cytoplasm"/>
    <property type="evidence" value="ECO:0000314"/>
    <property type="project" value="UniProtKB"/>
</dbReference>
<dbReference type="GO" id="GO:0005829">
    <property type="term" value="C:cytosol"/>
    <property type="evidence" value="ECO:0000304"/>
    <property type="project" value="Reactome"/>
</dbReference>
<dbReference type="GO" id="GO:0005765">
    <property type="term" value="C:lysosomal membrane"/>
    <property type="evidence" value="ECO:0000314"/>
    <property type="project" value="UniProtKB"/>
</dbReference>
<dbReference type="GO" id="GO:0005654">
    <property type="term" value="C:nucleoplasm"/>
    <property type="evidence" value="ECO:0000304"/>
    <property type="project" value="Reactome"/>
</dbReference>
<dbReference type="GO" id="GO:0005634">
    <property type="term" value="C:nucleus"/>
    <property type="evidence" value="ECO:0000314"/>
    <property type="project" value="UniProtKB"/>
</dbReference>
<dbReference type="GO" id="GO:0032991">
    <property type="term" value="C:protein-containing complex"/>
    <property type="evidence" value="ECO:0000314"/>
    <property type="project" value="UniProtKB"/>
</dbReference>
<dbReference type="GO" id="GO:0003682">
    <property type="term" value="F:chromatin binding"/>
    <property type="evidence" value="ECO:0007669"/>
    <property type="project" value="Ensembl"/>
</dbReference>
<dbReference type="GO" id="GO:0001228">
    <property type="term" value="F:DNA-binding transcription activator activity, RNA polymerase II-specific"/>
    <property type="evidence" value="ECO:0000314"/>
    <property type="project" value="UniProtKB"/>
</dbReference>
<dbReference type="GO" id="GO:0000981">
    <property type="term" value="F:DNA-binding transcription factor activity, RNA polymerase II-specific"/>
    <property type="evidence" value="ECO:0000247"/>
    <property type="project" value="NTNU_SB"/>
</dbReference>
<dbReference type="GO" id="GO:0001227">
    <property type="term" value="F:DNA-binding transcription repressor activity, RNA polymerase II-specific"/>
    <property type="evidence" value="ECO:0000303"/>
    <property type="project" value="BHF-UCL"/>
</dbReference>
<dbReference type="GO" id="GO:0070888">
    <property type="term" value="F:E-box binding"/>
    <property type="evidence" value="ECO:0000314"/>
    <property type="project" value="UniProtKB"/>
</dbReference>
<dbReference type="GO" id="GO:0046983">
    <property type="term" value="F:protein dimerization activity"/>
    <property type="evidence" value="ECO:0007669"/>
    <property type="project" value="Ensembl"/>
</dbReference>
<dbReference type="GO" id="GO:0000978">
    <property type="term" value="F:RNA polymerase II cis-regulatory region sequence-specific DNA binding"/>
    <property type="evidence" value="ECO:0000314"/>
    <property type="project" value="NTNU_SB"/>
</dbReference>
<dbReference type="GO" id="GO:0046849">
    <property type="term" value="P:bone remodeling"/>
    <property type="evidence" value="ECO:0007669"/>
    <property type="project" value="Ensembl"/>
</dbReference>
<dbReference type="GO" id="GO:0043010">
    <property type="term" value="P:camera-type eye development"/>
    <property type="evidence" value="ECO:0007669"/>
    <property type="project" value="Ensembl"/>
</dbReference>
<dbReference type="GO" id="GO:0045165">
    <property type="term" value="P:cell fate commitment"/>
    <property type="evidence" value="ECO:0007669"/>
    <property type="project" value="Ensembl"/>
</dbReference>
<dbReference type="GO" id="GO:1902362">
    <property type="term" value="P:melanocyte apoptotic process"/>
    <property type="evidence" value="ECO:0007669"/>
    <property type="project" value="Ensembl"/>
</dbReference>
<dbReference type="GO" id="GO:0030318">
    <property type="term" value="P:melanocyte differentiation"/>
    <property type="evidence" value="ECO:0000318"/>
    <property type="project" value="GO_Central"/>
</dbReference>
<dbReference type="GO" id="GO:0043066">
    <property type="term" value="P:negative regulation of apoptotic process"/>
    <property type="evidence" value="ECO:0007669"/>
    <property type="project" value="Ensembl"/>
</dbReference>
<dbReference type="GO" id="GO:0030336">
    <property type="term" value="P:negative regulation of cell migration"/>
    <property type="evidence" value="ECO:0000315"/>
    <property type="project" value="BHF-UCL"/>
</dbReference>
<dbReference type="GO" id="GO:0000122">
    <property type="term" value="P:negative regulation of transcription by RNA polymerase II"/>
    <property type="evidence" value="ECO:0000315"/>
    <property type="project" value="BHF-UCL"/>
</dbReference>
<dbReference type="GO" id="GO:0030316">
    <property type="term" value="P:osteoclast differentiation"/>
    <property type="evidence" value="ECO:0007669"/>
    <property type="project" value="Ensembl"/>
</dbReference>
<dbReference type="GO" id="GO:0045893">
    <property type="term" value="P:positive regulation of DNA-templated transcription"/>
    <property type="evidence" value="ECO:0000314"/>
    <property type="project" value="UniProtKB"/>
</dbReference>
<dbReference type="GO" id="GO:2000144">
    <property type="term" value="P:positive regulation of DNA-templated transcription initiation"/>
    <property type="evidence" value="ECO:0000314"/>
    <property type="project" value="CACAO"/>
</dbReference>
<dbReference type="GO" id="GO:0010628">
    <property type="term" value="P:positive regulation of gene expression"/>
    <property type="evidence" value="ECO:0000314"/>
    <property type="project" value="CACAO"/>
</dbReference>
<dbReference type="GO" id="GO:0045944">
    <property type="term" value="P:positive regulation of transcription by RNA polymerase II"/>
    <property type="evidence" value="ECO:0000314"/>
    <property type="project" value="UniProtKB"/>
</dbReference>
<dbReference type="GO" id="GO:0065003">
    <property type="term" value="P:protein-containing complex assembly"/>
    <property type="evidence" value="ECO:0000314"/>
    <property type="project" value="UniProtKB"/>
</dbReference>
<dbReference type="GO" id="GO:0042127">
    <property type="term" value="P:regulation of cell population proliferation"/>
    <property type="evidence" value="ECO:0007669"/>
    <property type="project" value="Ensembl"/>
</dbReference>
<dbReference type="GO" id="GO:0006355">
    <property type="term" value="P:regulation of DNA-templated transcription"/>
    <property type="evidence" value="ECO:0000315"/>
    <property type="project" value="UniProtKB"/>
</dbReference>
<dbReference type="GO" id="GO:0045670">
    <property type="term" value="P:regulation of osteoclast differentiation"/>
    <property type="evidence" value="ECO:0007669"/>
    <property type="project" value="Ensembl"/>
</dbReference>
<dbReference type="GO" id="GO:2001141">
    <property type="term" value="P:regulation of RNA biosynthetic process"/>
    <property type="evidence" value="ECO:0000314"/>
    <property type="project" value="CACAO"/>
</dbReference>
<dbReference type="GO" id="GO:0006357">
    <property type="term" value="P:regulation of transcription by RNA polymerase II"/>
    <property type="evidence" value="ECO:0000318"/>
    <property type="project" value="GO_Central"/>
</dbReference>
<dbReference type="GO" id="GO:0016055">
    <property type="term" value="P:Wnt signaling pathway"/>
    <property type="evidence" value="ECO:0007669"/>
    <property type="project" value="Ensembl"/>
</dbReference>
<dbReference type="CDD" id="cd18926">
    <property type="entry name" value="bHLHzip_MITF"/>
    <property type="match status" value="1"/>
</dbReference>
<dbReference type="FunFam" id="4.10.280.10:FF:000003">
    <property type="entry name" value="microphthalmia-associated transcription factor isoform X1"/>
    <property type="match status" value="1"/>
</dbReference>
<dbReference type="Gene3D" id="4.10.280.10">
    <property type="entry name" value="Helix-loop-helix DNA-binding domain"/>
    <property type="match status" value="1"/>
</dbReference>
<dbReference type="InterPro" id="IPR011598">
    <property type="entry name" value="bHLH_dom"/>
</dbReference>
<dbReference type="InterPro" id="IPR036638">
    <property type="entry name" value="HLH_DNA-bd_sf"/>
</dbReference>
<dbReference type="InterPro" id="IPR021802">
    <property type="entry name" value="MiT/TFE_C"/>
</dbReference>
<dbReference type="InterPro" id="IPR031867">
    <property type="entry name" value="MiT/TFE_N"/>
</dbReference>
<dbReference type="PANTHER" id="PTHR45776:SF4">
    <property type="entry name" value="MICROPHTHALMIA-ASSOCIATED TRANSCRIPTION FACTOR"/>
    <property type="match status" value="1"/>
</dbReference>
<dbReference type="PANTHER" id="PTHR45776">
    <property type="entry name" value="MIP04163P"/>
    <property type="match status" value="1"/>
</dbReference>
<dbReference type="Pfam" id="PF11851">
    <property type="entry name" value="DUF3371"/>
    <property type="match status" value="1"/>
</dbReference>
<dbReference type="Pfam" id="PF00010">
    <property type="entry name" value="HLH"/>
    <property type="match status" value="1"/>
</dbReference>
<dbReference type="Pfam" id="PF15951">
    <property type="entry name" value="MITF_TFEB_C_3_N"/>
    <property type="match status" value="1"/>
</dbReference>
<dbReference type="SMART" id="SM00353">
    <property type="entry name" value="HLH"/>
    <property type="match status" value="1"/>
</dbReference>
<dbReference type="SUPFAM" id="SSF47459">
    <property type="entry name" value="HLH, helix-loop-helix DNA-binding domain"/>
    <property type="match status" value="1"/>
</dbReference>
<dbReference type="PROSITE" id="PS50888">
    <property type="entry name" value="BHLH"/>
    <property type="match status" value="1"/>
</dbReference>
<name>MITF_HUMAN</name>
<gene>
    <name evidence="28 32" type="primary">MITF</name>
    <name type="synonym">BHLHE32</name>
</gene>
<feature type="chain" id="PRO_0000127276" description="Microphthalmia-associated transcription factor">
    <location>
        <begin position="1"/>
        <end position="526"/>
    </location>
</feature>
<feature type="domain" description="bHLH" evidence="2">
    <location>
        <begin position="311"/>
        <end position="364"/>
    </location>
</feature>
<feature type="region of interest" description="Disordered" evidence="3">
    <location>
        <begin position="1"/>
        <end position="54"/>
    </location>
</feature>
<feature type="region of interest" description="Transactivation">
    <location>
        <begin position="224"/>
        <end position="295"/>
    </location>
</feature>
<feature type="region of interest" description="Leucine-zipper" evidence="31">
    <location>
        <begin position="374"/>
        <end position="395"/>
    </location>
</feature>
<feature type="region of interest" description="DNA-binding regulation">
    <location>
        <begin position="401"/>
        <end position="431"/>
    </location>
</feature>
<feature type="region of interest" description="Disordered" evidence="3">
    <location>
        <begin position="496"/>
        <end position="526"/>
    </location>
</feature>
<feature type="coiled-coil region" evidence="31">
    <location>
        <begin position="355"/>
        <end position="402"/>
    </location>
</feature>
<feature type="compositionally biased region" description="Basic and acidic residues" evidence="3">
    <location>
        <begin position="15"/>
        <end position="25"/>
    </location>
</feature>
<feature type="compositionally biased region" description="Low complexity" evidence="3">
    <location>
        <begin position="41"/>
        <end position="54"/>
    </location>
</feature>
<feature type="compositionally biased region" description="Polar residues" evidence="3">
    <location>
        <begin position="499"/>
        <end position="509"/>
    </location>
</feature>
<feature type="modified residue" description="Phosphoserine; by MTOR" evidence="21">
    <location>
        <position position="5"/>
    </location>
</feature>
<feature type="modified residue" description="Phosphoserine; by MAPK" evidence="6">
    <location>
        <position position="180"/>
    </location>
</feature>
<feature type="modified residue" description="Phosphoserine; by MARK3" evidence="21">
    <location>
        <position position="280"/>
    </location>
</feature>
<feature type="modified residue" description="Phosphoserine; by GSK3" evidence="5">
    <location>
        <position position="405"/>
    </location>
</feature>
<feature type="modified residue" description="Phosphoserine" evidence="33 34 36">
    <location>
        <position position="414"/>
    </location>
</feature>
<feature type="modified residue" description="Phosphoserine" evidence="35">
    <location>
        <position position="491"/>
    </location>
</feature>
<feature type="modified residue" description="Phosphoserine; by RPS6KA1" evidence="6">
    <location>
        <position position="516"/>
    </location>
</feature>
<feature type="cross-link" description="Glycyl lysine isopeptide (Lys-Gly) (interchain with G-Cter in SUMO)" evidence="9">
    <location>
        <position position="289"/>
    </location>
</feature>
<feature type="cross-link" description="Glycyl lysine isopeptide (Lys-Gly) (interchain with G-Cter in SUMO)" evidence="9">
    <location>
        <position position="423"/>
    </location>
</feature>
<feature type="splice variant" id="VSP_002127" description="In isoform M1, isoform M2 and isoform Mdel." evidence="26 27 28">
    <original>MQSESGIVPDFEVGEEFHEEPKTYYELKSQPLKSSSSAEHPGASKPPISSSSMTSRILLRQQLMREQMQEQERREQQQKLQAAQFMQQRVPVSQTPAINVSVPTTLPSATQVPMEVLK</original>
    <variation>MLEMLEYNHYQ</variation>
    <location>
        <begin position="1"/>
        <end position="118"/>
    </location>
</feature>
<feature type="splice variant" id="VSP_046438" description="In isoform 12." evidence="25">
    <location>
        <begin position="1"/>
        <end position="52"/>
    </location>
</feature>
<feature type="splice variant" id="VSP_002126" description="In isoform H1 and isoform H2." evidence="30">
    <original>MQSESGIVPDFEVGEEFHEEPKTYYELKSQPLKSS</original>
    <variation>MEALRVQMFMPCSFESLYL</variation>
    <location>
        <begin position="1"/>
        <end position="35"/>
    </location>
</feature>
<feature type="splice variant" id="VSP_002124" description="In isoform B1 and isoform B2." evidence="30">
    <original>MQSESGIVPDFEVGEEFHEEPKTYYELKSQPLKS</original>
    <variation>MLYAFWFSH</variation>
    <location>
        <begin position="1"/>
        <end position="34"/>
    </location>
</feature>
<feature type="splice variant" id="VSP_002125" description="In isoform C1 and isoform C2." evidence="30">
    <original>MQSESGIVPDFEVGEEFHEEPKTYYELKSQPLKS</original>
    <variation>MGHLENTSVVFPRAIFSLCEKETRKLTLCLFSR</variation>
    <location>
        <begin position="1"/>
        <end position="34"/>
    </location>
</feature>
<feature type="splice variant" id="VSP_045178" description="In isoform Mdel." evidence="27">
    <location>
        <begin position="139"/>
        <end position="194"/>
    </location>
</feature>
<feature type="splice variant" id="VSP_045179" description="In isoform Mdel and isoform 12." evidence="25 27">
    <location>
        <begin position="293"/>
        <end position="298"/>
    </location>
</feature>
<feature type="splice variant" id="VSP_002128" description="In isoform A2, isoform B2, isoform C2, isoform H2 and isoform M2." evidence="24 26 29">
    <location>
        <begin position="294"/>
        <end position="299"/>
    </location>
</feature>
<feature type="sequence variant" id="VAR_078311" description="In WS2A; uncertain significance; dbSNP:rs1559742541." evidence="19">
    <original>A</original>
    <variation>T</variation>
    <location>
        <position position="294"/>
    </location>
</feature>
<feature type="sequence variant" id="VAR_010297" description="In WS2A; uncertain significance." evidence="22">
    <original>R</original>
    <variation>K</variation>
    <location>
        <position position="310"/>
    </location>
</feature>
<feature type="sequence variant" id="VAR_077922" description="In COMMAD; has both cytoplasmic and nuclear localization; decreased binding to M-box or E-box DNA sequences; dbSNP:rs1057519325." evidence="18">
    <original>K</original>
    <variation>N</variation>
    <location>
        <position position="313"/>
    </location>
</feature>
<feature type="sequence variant" id="VAR_010298" description="In TADS; dbSNP:rs104893745." evidence="7">
    <original>N</original>
    <variation>K</variation>
    <location>
        <position position="317"/>
    </location>
</feature>
<feature type="sequence variant" id="VAR_077923" description="In COMMAD; dbSNP:rs1057519326." evidence="18">
    <original>R</original>
    <variation>G</variation>
    <location>
        <position position="324"/>
    </location>
</feature>
<feature type="sequence variant" id="VAR_010299" description="In WS2A and COMMAD; does not localize to the nucleus; does not bind M-box or E-box DNA sequences; loss of function in transcriptional regulation; dominant negative effect; dbSNP:rs1553704814." evidence="18 22">
    <location>
        <position position="324"/>
    </location>
</feature>
<feature type="sequence variant" id="VAR_010300" description="In WS2A; dbSNP:rs104893744." evidence="22">
    <original>S</original>
    <variation>P</variation>
    <location>
        <position position="357"/>
    </location>
</feature>
<feature type="sequence variant" id="VAR_010301" description="In WS2A." evidence="22">
    <original>N</original>
    <variation>D</variation>
    <location>
        <position position="385"/>
    </location>
</feature>
<feature type="sequence variant" id="VAR_010302" description="In WS2A; dbSNP:rs104893747." evidence="22">
    <original>S</original>
    <variation>P</variation>
    <location>
        <position position="405"/>
    </location>
</feature>
<feature type="sequence variant" id="VAR_067367" description="Risk factor for CMM8; risk factor for pheochromocytomas and paragangliomas; results in impaired sumoylation; dbSNP:rs149617956." evidence="12 13 17">
    <original>E</original>
    <variation>K</variation>
    <location>
        <position position="425"/>
    </location>
</feature>
<feature type="mutagenesis site" description="Impaired phosphorylation by MTOR, leading to abolished ubiquitination and degradation by the SCF(BTRC) complex." evidence="21">
    <original>S</original>
    <variation>A</variation>
    <location>
        <position position="5"/>
    </location>
</feature>
<feature type="mutagenesis site" description="Abolishes both transcription factor activity and ubiquitination, leading to an inert and stable protein; when associated with A-516." evidence="6">
    <original>S</original>
    <variation>A</variation>
    <location>
        <position position="180"/>
    </location>
</feature>
<feature type="mutagenesis site" description="Accumulates in the nucleus due to impaired phosphorylation." evidence="10">
    <original>S</original>
    <variation>A</variation>
    <location>
        <position position="280"/>
    </location>
</feature>
<feature type="mutagenesis site" description="Loss of sumoylation; when associated with R-423." evidence="9">
    <original>K</original>
    <variation>R</variation>
    <location>
        <position position="289"/>
    </location>
</feature>
<feature type="mutagenesis site" description="Loss of phosphorylation and function." evidence="5">
    <original>S</original>
    <variation>A</variation>
    <variation>P</variation>
    <location>
        <position position="405"/>
    </location>
</feature>
<feature type="mutagenesis site" description="Loss of sumoylation; when associated with R-289." evidence="9">
    <original>K</original>
    <variation>R</variation>
    <location>
        <position position="423"/>
    </location>
</feature>
<feature type="mutagenesis site" description="Abolishes both transcription factor activity and ubiquitination, leading to an inert and stable protein; when associated with A-180." evidence="6">
    <original>S</original>
    <variation>A</variation>
    <location>
        <position position="516"/>
    </location>
</feature>
<feature type="sequence conflict" description="In Ref. 5; BAG58874." evidence="30" ref="5">
    <original>I</original>
    <variation>T</variation>
    <location>
        <position position="241"/>
    </location>
</feature>
<feature type="helix" evidence="38">
    <location>
        <begin position="217"/>
        <end position="221"/>
    </location>
</feature>
<feature type="helix" evidence="38">
    <location>
        <begin position="225"/>
        <end position="236"/>
    </location>
</feature>
<feature type="helix" evidence="38">
    <location>
        <begin position="239"/>
        <end position="242"/>
    </location>
</feature>
<feature type="helix" evidence="37">
    <location>
        <begin position="326"/>
        <end position="337"/>
    </location>
</feature>
<feature type="helix" evidence="37">
    <location>
        <begin position="350"/>
        <end position="370"/>
    </location>
</feature>
<feature type="helix" evidence="37">
    <location>
        <begin position="374"/>
        <end position="394"/>
    </location>
</feature>
<protein>
    <recommendedName>
        <fullName>Microphthalmia-associated transcription factor</fullName>
    </recommendedName>
    <alternativeName>
        <fullName>Class E basic helix-loop-helix protein 32</fullName>
        <shortName>bHLHe32</shortName>
    </alternativeName>
</protein>
<evidence type="ECO:0000250" key="1">
    <source>
        <dbReference type="UniProtKB" id="Q08874"/>
    </source>
</evidence>
<evidence type="ECO:0000255" key="2">
    <source>
        <dbReference type="PROSITE-ProRule" id="PRU00981"/>
    </source>
</evidence>
<evidence type="ECO:0000256" key="3">
    <source>
        <dbReference type="SAM" id="MobiDB-lite"/>
    </source>
</evidence>
<evidence type="ECO:0000269" key="4">
    <source>
    </source>
</evidence>
<evidence type="ECO:0000269" key="5">
    <source>
    </source>
</evidence>
<evidence type="ECO:0000269" key="6">
    <source>
    </source>
</evidence>
<evidence type="ECO:0000269" key="7">
    <source>
    </source>
</evidence>
<evidence type="ECO:0000269" key="8">
    <source>
    </source>
</evidence>
<evidence type="ECO:0000269" key="9">
    <source>
    </source>
</evidence>
<evidence type="ECO:0000269" key="10">
    <source>
    </source>
</evidence>
<evidence type="ECO:0000269" key="11">
    <source>
    </source>
</evidence>
<evidence type="ECO:0000269" key="12">
    <source>
    </source>
</evidence>
<evidence type="ECO:0000269" key="13">
    <source>
    </source>
</evidence>
<evidence type="ECO:0000269" key="14">
    <source>
    </source>
</evidence>
<evidence type="ECO:0000269" key="15">
    <source>
    </source>
</evidence>
<evidence type="ECO:0000269" key="16">
    <source>
    </source>
</evidence>
<evidence type="ECO:0000269" key="17">
    <source>
    </source>
</evidence>
<evidence type="ECO:0000269" key="18">
    <source>
    </source>
</evidence>
<evidence type="ECO:0000269" key="19">
    <source>
    </source>
</evidence>
<evidence type="ECO:0000269" key="20">
    <source>
    </source>
</evidence>
<evidence type="ECO:0000269" key="21">
    <source>
    </source>
</evidence>
<evidence type="ECO:0000269" key="22">
    <source>
    </source>
</evidence>
<evidence type="ECO:0000269" key="23">
    <source>
    </source>
</evidence>
<evidence type="ECO:0000303" key="24">
    <source>
    </source>
</evidence>
<evidence type="ECO:0000303" key="25">
    <source>
    </source>
</evidence>
<evidence type="ECO:0000303" key="26">
    <source>
    </source>
</evidence>
<evidence type="ECO:0000303" key="27">
    <source>
    </source>
</evidence>
<evidence type="ECO:0000303" key="28">
    <source>
    </source>
</evidence>
<evidence type="ECO:0000303" key="29">
    <source>
    </source>
</evidence>
<evidence type="ECO:0000305" key="30"/>
<evidence type="ECO:0000305" key="31">
    <source>
    </source>
</evidence>
<evidence type="ECO:0000312" key="32">
    <source>
        <dbReference type="HGNC" id="HGNC:7105"/>
    </source>
</evidence>
<evidence type="ECO:0007744" key="33">
    <source>
    </source>
</evidence>
<evidence type="ECO:0007744" key="34">
    <source>
    </source>
</evidence>
<evidence type="ECO:0007744" key="35">
    <source>
    </source>
</evidence>
<evidence type="ECO:0007744" key="36">
    <source>
    </source>
</evidence>
<evidence type="ECO:0007829" key="37">
    <source>
        <dbReference type="PDB" id="7EOD"/>
    </source>
</evidence>
<evidence type="ECO:0007829" key="38">
    <source>
        <dbReference type="PDB" id="8E1D"/>
    </source>
</evidence>
<organism>
    <name type="scientific">Homo sapiens</name>
    <name type="common">Human</name>
    <dbReference type="NCBI Taxonomy" id="9606"/>
    <lineage>
        <taxon>Eukaryota</taxon>
        <taxon>Metazoa</taxon>
        <taxon>Chordata</taxon>
        <taxon>Craniata</taxon>
        <taxon>Vertebrata</taxon>
        <taxon>Euteleostomi</taxon>
        <taxon>Mammalia</taxon>
        <taxon>Eutheria</taxon>
        <taxon>Euarchontoglires</taxon>
        <taxon>Primates</taxon>
        <taxon>Haplorrhini</taxon>
        <taxon>Catarrhini</taxon>
        <taxon>Hominidae</taxon>
        <taxon>Homo</taxon>
    </lineage>
</organism>
<reference key="1">
    <citation type="journal article" date="1998" name="Biochem. Biophys. Res. Commun.">
        <title>Identification of a novel isoform of microphthalmia-associated transcription factor that is enriched in retinal pigment epithelium.</title>
        <authorList>
            <person name="Amae S."/>
            <person name="Fuse N."/>
            <person name="Yasumoto K."/>
            <person name="Sato S."/>
            <person name="Yajima I."/>
            <person name="Yamamoto H."/>
            <person name="Udono T."/>
            <person name="Durlu Y.K."/>
            <person name="Tamai M."/>
            <person name="Takahashi K."/>
            <person name="Shibahara S."/>
        </authorList>
    </citation>
    <scope>NUCLEOTIDE SEQUENCE [MRNA] (ISOFORM A2)</scope>
    <scope>NUCLEOTIDE SEQUENCE [MRNA] OF 1-35 (ISOFORMS H1/H2)</scope>
    <scope>FUNCTION</scope>
    <scope>TISSUE SPECIFICITY</scope>
    <scope>INVOLVEMENT IN WS2A</scope>
    <source>
        <tissue>Kidney</tissue>
    </source>
</reference>
<reference key="2">
    <citation type="journal article" date="1994" name="Hum. Mol. Genet.">
        <title>Cloning of MITF, the human homolog of the mouse microphthalmia gene and assignment to chromosome 3p14.1-p12.3.</title>
        <authorList>
            <person name="Tachibana M."/>
            <person name="Perez-Jurado L.A."/>
            <person name="Nakayama A."/>
            <person name="Hodgkinson C.A."/>
            <person name="Li X."/>
            <person name="Schneider M."/>
            <person name="Miki T."/>
            <person name="Fex J."/>
            <person name="Francke U."/>
            <person name="Arnheiter H."/>
        </authorList>
    </citation>
    <scope>NUCLEOTIDE SEQUENCE [MRNA] (ISOFORM M1)</scope>
    <source>
        <tissue>Skin</tissue>
    </source>
</reference>
<reference key="3">
    <citation type="journal article" date="2010" name="BMC Med.">
        <title>Mitf-Mdel, a novel melanocyte/melanoma-specific isoform of microphthalmia-associated transcription factor-M, as a candidate biomarker for melanoma.</title>
        <authorList>
            <person name="Wang Y."/>
            <person name="Radfar S."/>
            <person name="Liu S."/>
            <person name="Riker A.I."/>
            <person name="Khong H.T."/>
        </authorList>
    </citation>
    <scope>NUCLEOTIDE SEQUENCE [MRNA] (ISOFORM MDEL)</scope>
    <scope>TISSUE SPECIFICITY</scope>
</reference>
<reference key="4">
    <citation type="journal article" date="2001" name="Genome Res.">
        <title>Towards a catalog of human genes and proteins: sequencing and analysis of 500 novel complete protein coding human cDNAs.</title>
        <authorList>
            <person name="Wiemann S."/>
            <person name="Weil B."/>
            <person name="Wellenreuther R."/>
            <person name="Gassenhuber J."/>
            <person name="Glassl S."/>
            <person name="Ansorge W."/>
            <person name="Boecher M."/>
            <person name="Bloecker H."/>
            <person name="Bauersachs S."/>
            <person name="Blum H."/>
            <person name="Lauber J."/>
            <person name="Duesterhoeft A."/>
            <person name="Beyer A."/>
            <person name="Koehrer K."/>
            <person name="Strack N."/>
            <person name="Mewes H.-W."/>
            <person name="Ottenwaelder B."/>
            <person name="Obermaier B."/>
            <person name="Tampe J."/>
            <person name="Heubner D."/>
            <person name="Wambutt R."/>
            <person name="Korn B."/>
            <person name="Klein M."/>
            <person name="Poustka A."/>
        </authorList>
    </citation>
    <scope>NUCLEOTIDE SEQUENCE [LARGE SCALE MRNA] (ISOFORM A2)</scope>
    <source>
        <tissue>Uterus</tissue>
    </source>
</reference>
<reference key="5">
    <citation type="journal article" date="2004" name="Nat. Genet.">
        <title>Complete sequencing and characterization of 21,243 full-length human cDNAs.</title>
        <authorList>
            <person name="Ota T."/>
            <person name="Suzuki Y."/>
            <person name="Nishikawa T."/>
            <person name="Otsuki T."/>
            <person name="Sugiyama T."/>
            <person name="Irie R."/>
            <person name="Wakamatsu A."/>
            <person name="Hayashi K."/>
            <person name="Sato H."/>
            <person name="Nagai K."/>
            <person name="Kimura K."/>
            <person name="Makita H."/>
            <person name="Sekine M."/>
            <person name="Obayashi M."/>
            <person name="Nishi T."/>
            <person name="Shibahara T."/>
            <person name="Tanaka T."/>
            <person name="Ishii S."/>
            <person name="Yamamoto J."/>
            <person name="Saito K."/>
            <person name="Kawai Y."/>
            <person name="Isono Y."/>
            <person name="Nakamura Y."/>
            <person name="Nagahari K."/>
            <person name="Murakami K."/>
            <person name="Yasuda T."/>
            <person name="Iwayanagi T."/>
            <person name="Wagatsuma M."/>
            <person name="Shiratori A."/>
            <person name="Sudo H."/>
            <person name="Hosoiri T."/>
            <person name="Kaku Y."/>
            <person name="Kodaira H."/>
            <person name="Kondo H."/>
            <person name="Sugawara M."/>
            <person name="Takahashi M."/>
            <person name="Kanda K."/>
            <person name="Yokoi T."/>
            <person name="Furuya T."/>
            <person name="Kikkawa E."/>
            <person name="Omura Y."/>
            <person name="Abe K."/>
            <person name="Kamihara K."/>
            <person name="Katsuta N."/>
            <person name="Sato K."/>
            <person name="Tanikawa M."/>
            <person name="Yamazaki M."/>
            <person name="Ninomiya K."/>
            <person name="Ishibashi T."/>
            <person name="Yamashita H."/>
            <person name="Murakawa K."/>
            <person name="Fujimori K."/>
            <person name="Tanai H."/>
            <person name="Kimata M."/>
            <person name="Watanabe M."/>
            <person name="Hiraoka S."/>
            <person name="Chiba Y."/>
            <person name="Ishida S."/>
            <person name="Ono Y."/>
            <person name="Takiguchi S."/>
            <person name="Watanabe S."/>
            <person name="Yosida M."/>
            <person name="Hotuta T."/>
            <person name="Kusano J."/>
            <person name="Kanehori K."/>
            <person name="Takahashi-Fujii A."/>
            <person name="Hara H."/>
            <person name="Tanase T.-O."/>
            <person name="Nomura Y."/>
            <person name="Togiya S."/>
            <person name="Komai F."/>
            <person name="Hara R."/>
            <person name="Takeuchi K."/>
            <person name="Arita M."/>
            <person name="Imose N."/>
            <person name="Musashino K."/>
            <person name="Yuuki H."/>
            <person name="Oshima A."/>
            <person name="Sasaki N."/>
            <person name="Aotsuka S."/>
            <person name="Yoshikawa Y."/>
            <person name="Matsunawa H."/>
            <person name="Ichihara T."/>
            <person name="Shiohata N."/>
            <person name="Sano S."/>
            <person name="Moriya S."/>
            <person name="Momiyama H."/>
            <person name="Satoh N."/>
            <person name="Takami S."/>
            <person name="Terashima Y."/>
            <person name="Suzuki O."/>
            <person name="Nakagawa S."/>
            <person name="Senoh A."/>
            <person name="Mizoguchi H."/>
            <person name="Goto Y."/>
            <person name="Shimizu F."/>
            <person name="Wakebe H."/>
            <person name="Hishigaki H."/>
            <person name="Watanabe T."/>
            <person name="Sugiyama A."/>
            <person name="Takemoto M."/>
            <person name="Kawakami B."/>
            <person name="Yamazaki M."/>
            <person name="Watanabe K."/>
            <person name="Kumagai A."/>
            <person name="Itakura S."/>
            <person name="Fukuzumi Y."/>
            <person name="Fujimori Y."/>
            <person name="Komiyama M."/>
            <person name="Tashiro H."/>
            <person name="Tanigami A."/>
            <person name="Fujiwara T."/>
            <person name="Ono T."/>
            <person name="Yamada K."/>
            <person name="Fujii Y."/>
            <person name="Ozaki K."/>
            <person name="Hirao M."/>
            <person name="Ohmori Y."/>
            <person name="Kawabata A."/>
            <person name="Hikiji T."/>
            <person name="Kobatake N."/>
            <person name="Inagaki H."/>
            <person name="Ikema Y."/>
            <person name="Okamoto S."/>
            <person name="Okitani R."/>
            <person name="Kawakami T."/>
            <person name="Noguchi S."/>
            <person name="Itoh T."/>
            <person name="Shigeta K."/>
            <person name="Senba T."/>
            <person name="Matsumura K."/>
            <person name="Nakajima Y."/>
            <person name="Mizuno T."/>
            <person name="Morinaga M."/>
            <person name="Sasaki M."/>
            <person name="Togashi T."/>
            <person name="Oyama M."/>
            <person name="Hata H."/>
            <person name="Watanabe M."/>
            <person name="Komatsu T."/>
            <person name="Mizushima-Sugano J."/>
            <person name="Satoh T."/>
            <person name="Shirai Y."/>
            <person name="Takahashi Y."/>
            <person name="Nakagawa K."/>
            <person name="Okumura K."/>
            <person name="Nagase T."/>
            <person name="Nomura N."/>
            <person name="Kikuchi H."/>
            <person name="Masuho Y."/>
            <person name="Yamashita R."/>
            <person name="Nakai K."/>
            <person name="Yada T."/>
            <person name="Nakamura Y."/>
            <person name="Ohara O."/>
            <person name="Isogai T."/>
            <person name="Sugano S."/>
        </authorList>
    </citation>
    <scope>NUCLEOTIDE SEQUENCE [LARGE SCALE MRNA] (ISOFORM 12)</scope>
    <source>
        <tissue>Thalamus</tissue>
    </source>
</reference>
<reference key="6">
    <citation type="journal article" date="2006" name="Nature">
        <title>The DNA sequence, annotation and analysis of human chromosome 3.</title>
        <authorList>
            <person name="Muzny D.M."/>
            <person name="Scherer S.E."/>
            <person name="Kaul R."/>
            <person name="Wang J."/>
            <person name="Yu J."/>
            <person name="Sudbrak R."/>
            <person name="Buhay C.J."/>
            <person name="Chen R."/>
            <person name="Cree A."/>
            <person name="Ding Y."/>
            <person name="Dugan-Rocha S."/>
            <person name="Gill R."/>
            <person name="Gunaratne P."/>
            <person name="Harris R.A."/>
            <person name="Hawes A.C."/>
            <person name="Hernandez J."/>
            <person name="Hodgson A.V."/>
            <person name="Hume J."/>
            <person name="Jackson A."/>
            <person name="Khan Z.M."/>
            <person name="Kovar-Smith C."/>
            <person name="Lewis L.R."/>
            <person name="Lozado R.J."/>
            <person name="Metzker M.L."/>
            <person name="Milosavljevic A."/>
            <person name="Miner G.R."/>
            <person name="Morgan M.B."/>
            <person name="Nazareth L.V."/>
            <person name="Scott G."/>
            <person name="Sodergren E."/>
            <person name="Song X.-Z."/>
            <person name="Steffen D."/>
            <person name="Wei S."/>
            <person name="Wheeler D.A."/>
            <person name="Wright M.W."/>
            <person name="Worley K.C."/>
            <person name="Yuan Y."/>
            <person name="Zhang Z."/>
            <person name="Adams C.Q."/>
            <person name="Ansari-Lari M.A."/>
            <person name="Ayele M."/>
            <person name="Brown M.J."/>
            <person name="Chen G."/>
            <person name="Chen Z."/>
            <person name="Clendenning J."/>
            <person name="Clerc-Blankenburg K.P."/>
            <person name="Chen R."/>
            <person name="Chen Z."/>
            <person name="Davis C."/>
            <person name="Delgado O."/>
            <person name="Dinh H.H."/>
            <person name="Dong W."/>
            <person name="Draper H."/>
            <person name="Ernst S."/>
            <person name="Fu G."/>
            <person name="Gonzalez-Garay M.L."/>
            <person name="Garcia D.K."/>
            <person name="Gillett W."/>
            <person name="Gu J."/>
            <person name="Hao B."/>
            <person name="Haugen E."/>
            <person name="Havlak P."/>
            <person name="He X."/>
            <person name="Hennig S."/>
            <person name="Hu S."/>
            <person name="Huang W."/>
            <person name="Jackson L.R."/>
            <person name="Jacob L.S."/>
            <person name="Kelly S.H."/>
            <person name="Kube M."/>
            <person name="Levy R."/>
            <person name="Li Z."/>
            <person name="Liu B."/>
            <person name="Liu J."/>
            <person name="Liu W."/>
            <person name="Lu J."/>
            <person name="Maheshwari M."/>
            <person name="Nguyen B.-V."/>
            <person name="Okwuonu G.O."/>
            <person name="Palmeiri A."/>
            <person name="Pasternak S."/>
            <person name="Perez L.M."/>
            <person name="Phelps K.A."/>
            <person name="Plopper F.J."/>
            <person name="Qiang B."/>
            <person name="Raymond C."/>
            <person name="Rodriguez R."/>
            <person name="Saenphimmachak C."/>
            <person name="Santibanez J."/>
            <person name="Shen H."/>
            <person name="Shen Y."/>
            <person name="Subramanian S."/>
            <person name="Tabor P.E."/>
            <person name="Verduzco D."/>
            <person name="Waldron L."/>
            <person name="Wang J."/>
            <person name="Wang J."/>
            <person name="Wang Q."/>
            <person name="Williams G.A."/>
            <person name="Wong G.K.-S."/>
            <person name="Yao Z."/>
            <person name="Zhang J."/>
            <person name="Zhang X."/>
            <person name="Zhao G."/>
            <person name="Zhou J."/>
            <person name="Zhou Y."/>
            <person name="Nelson D."/>
            <person name="Lehrach H."/>
            <person name="Reinhardt R."/>
            <person name="Naylor S.L."/>
            <person name="Yang H."/>
            <person name="Olson M."/>
            <person name="Weinstock G."/>
            <person name="Gibbs R.A."/>
        </authorList>
    </citation>
    <scope>NUCLEOTIDE SEQUENCE [LARGE SCALE GENOMIC DNA]</scope>
</reference>
<reference key="7">
    <citation type="journal article" date="2004" name="Genome Res.">
        <title>The status, quality, and expansion of the NIH full-length cDNA project: the Mammalian Gene Collection (MGC).</title>
        <authorList>
            <consortium name="The MGC Project Team"/>
        </authorList>
    </citation>
    <scope>NUCLEOTIDE SEQUENCE [LARGE SCALE MRNA] (ISOFORMS M1 AND M2)</scope>
    <source>
        <tissue>Skin</tissue>
    </source>
</reference>
<reference key="8">
    <citation type="journal article" date="2000" name="Biochim. Biophys. Acta">
        <title>Structural organization of the human microphthalmia-associated transcription factor gene containing four alternative promoters.</title>
        <authorList>
            <person name="Udono T."/>
            <person name="Yasumoto K."/>
            <person name="Takeda K."/>
            <person name="Amae S."/>
            <person name="Watanabe K."/>
            <person name="Saito H."/>
            <person name="Fuse N."/>
            <person name="Tachibana M."/>
            <person name="Takahashi K."/>
            <person name="Tamai M."/>
            <person name="Shibahara S."/>
        </authorList>
    </citation>
    <scope>PARTIAL NUCLEOTIDE SEQUENCE [GENOMIC DNA] (ISOFORMS A1/A2; B1/B2; H1/H2 AND M1/M2)</scope>
</reference>
<reference key="9">
    <citation type="journal article" date="1999" name="J. Biochem.">
        <title>Molecular cloning of cDNA encoding a novel microphthalmia-associated transcription factor isoform with a distinct amino-terminus.</title>
        <authorList>
            <person name="Fuse N."/>
            <person name="Yasumoto K."/>
            <person name="Takeda K."/>
            <person name="Amae S."/>
            <person name="Yoshizawa M."/>
            <person name="Udono T."/>
            <person name="Takahashi K."/>
            <person name="Tamai M."/>
            <person name="Tomita Y."/>
            <person name="Tachibana M."/>
            <person name="Shibahara S."/>
        </authorList>
    </citation>
    <scope>ALTERNATIVE SPLICING (ISOFORM C1/C2)</scope>
    <scope>TISSUE SPECIFICITY</scope>
    <source>
        <tissue>Kidney</tissue>
    </source>
</reference>
<reference key="10">
    <citation type="journal article" date="2000" name="Genes Dev.">
        <title>c-Kit triggers dual phosphorylations, which couple activation and degradation of the essential melanocyte factor Mi.</title>
        <authorList>
            <person name="Wu M."/>
            <person name="Hemesath T.J."/>
            <person name="Takemoto C.M."/>
            <person name="Horstmann M.A."/>
            <person name="Wells A.G."/>
            <person name="Price E.R."/>
            <person name="Fisher D.Z."/>
            <person name="Fisher D.E."/>
        </authorList>
    </citation>
    <scope>PHOSPHORYLATION AT SER-180 AND SER-516</scope>
    <scope>UBIQUITINATION</scope>
    <scope>MUTAGENESIS OF SER-180 AND SER-516</scope>
</reference>
<reference key="11">
    <citation type="journal article" date="2000" name="Hum. Mol. Genet.">
        <title>Ser298 of MITF, a mutation site in Waardenburg syndrome type 2, is a phosphorylation site with functional significance.</title>
        <authorList>
            <person name="Takeda K."/>
            <person name="Takemoto C."/>
            <person name="Kobayashi I."/>
            <person name="Watanabe A."/>
            <person name="Nobukuni Y."/>
            <person name="Fisher D.E."/>
            <person name="Tachibana M."/>
        </authorList>
    </citation>
    <scope>FUNCTION</scope>
    <scope>MUTAGENESIS OF SER-405</scope>
    <scope>PHOSPHORYLATION AT SER-405</scope>
</reference>
<reference key="12">
    <citation type="journal article" date="2004" name="Immunity">
        <title>The function of lysyl-tRNA synthetase and Ap4A as signaling regulators of MITF activity in FcepsilonRI-activated mast cells.</title>
        <authorList>
            <person name="Lee Y.N."/>
            <person name="Nechushtan H."/>
            <person name="Figov N."/>
            <person name="Razin E."/>
        </authorList>
    </citation>
    <scope>INTERACTION WITH KARS1</scope>
</reference>
<reference key="13">
    <citation type="journal article" date="2005" name="J. Biol. Chem.">
        <title>Sumoylation of MITF and its related family members TFE3 and TFEB.</title>
        <authorList>
            <person name="Miller A.J."/>
            <person name="Levy C."/>
            <person name="Davis I.J."/>
            <person name="Razin E."/>
            <person name="Fisher D.E."/>
        </authorList>
    </citation>
    <scope>SUBUNIT</scope>
    <scope>SUMOYLATION AT LYS-289 AND LYS-423</scope>
    <scope>MUTAGENESIS OF LYS-289 AND LYS-423</scope>
</reference>
<reference key="14">
    <citation type="journal article" date="2006" name="Mol. Biol. Cell">
        <title>Microphthalmia-associated transcription factor interactions with 14-3-3 modulate differentiation of committed myeloid precursors.</title>
        <authorList>
            <person name="Bronisz A."/>
            <person name="Sharma S.M."/>
            <person name="Hu R."/>
            <person name="Godlewski J."/>
            <person name="Tzivion G."/>
            <person name="Mansky K.C."/>
            <person name="Ostrowski M.C."/>
        </authorList>
    </citation>
    <scope>SUBCELLULAR LOCATION</scope>
    <scope>PHOSPHORYLATION AT SER-280</scope>
    <scope>MUTAGENESIS OF SER-280</scope>
</reference>
<reference key="15">
    <citation type="journal article" date="2008" name="J. Proteome Res.">
        <title>Combining protein-based IMAC, peptide-based IMAC, and MudPIT for efficient phosphoproteomic analysis.</title>
        <authorList>
            <person name="Cantin G.T."/>
            <person name="Yi W."/>
            <person name="Lu B."/>
            <person name="Park S.K."/>
            <person name="Xu T."/>
            <person name="Lee J.-D."/>
            <person name="Yates J.R. III"/>
        </authorList>
    </citation>
    <scope>PHOSPHORYLATION [LARGE SCALE ANALYSIS] AT SER-414</scope>
    <scope>IDENTIFICATION BY MASS SPECTROMETRY [LARGE SCALE ANALYSIS]</scope>
    <source>
        <tissue>Cervix carcinoma</tissue>
    </source>
</reference>
<reference key="16">
    <citation type="journal article" date="2008" name="Proc. Natl. Acad. Sci. U.S.A.">
        <title>A quantitative atlas of mitotic phosphorylation.</title>
        <authorList>
            <person name="Dephoure N."/>
            <person name="Zhou C."/>
            <person name="Villen J."/>
            <person name="Beausoleil S.A."/>
            <person name="Bakalarski C.E."/>
            <person name="Elledge S.J."/>
            <person name="Gygi S.P."/>
        </authorList>
    </citation>
    <scope>PHOSPHORYLATION [LARGE SCALE ANALYSIS] AT SER-414</scope>
    <scope>IDENTIFICATION BY MASS SPECTROMETRY [LARGE SCALE ANALYSIS]</scope>
    <source>
        <tissue>Cervix carcinoma</tissue>
    </source>
</reference>
<reference key="17">
    <citation type="journal article" date="2010" name="Sci. Signal.">
        <title>Quantitative phosphoproteomics reveals widespread full phosphorylation site occupancy during mitosis.</title>
        <authorList>
            <person name="Olsen J.V."/>
            <person name="Vermeulen M."/>
            <person name="Santamaria A."/>
            <person name="Kumar C."/>
            <person name="Miller M.L."/>
            <person name="Jensen L.J."/>
            <person name="Gnad F."/>
            <person name="Cox J."/>
            <person name="Jensen T.S."/>
            <person name="Nigg E.A."/>
            <person name="Brunak S."/>
            <person name="Mann M."/>
        </authorList>
    </citation>
    <scope>PHOSPHORYLATION [LARGE SCALE ANALYSIS] AT SER-491</scope>
    <scope>IDENTIFICATION BY MASS SPECTROMETRY [LARGE SCALE ANALYSIS]</scope>
    <source>
        <tissue>Cervix carcinoma</tissue>
    </source>
</reference>
<reference key="18">
    <citation type="journal article" date="2012" name="Cell Cycle">
        <title>The tumor suppressor HINT1 regulates MITF and beta-catenin transcriptional activity in melanoma cells.</title>
        <authorList>
            <person name="Genovese G."/>
            <person name="Ghosh P."/>
            <person name="Li H."/>
            <person name="Rettino A."/>
            <person name="Sioletic S."/>
            <person name="Cittadini A."/>
            <person name="Sgambato A."/>
        </authorList>
    </citation>
    <scope>FUNCTION</scope>
    <scope>IDENTIFICATION IN A COMPLEX WITH HINT1 AND CTNNB1</scope>
</reference>
<reference key="19">
    <citation type="journal article" date="2013" name="J. Proteome Res.">
        <title>Toward a comprehensive characterization of a human cancer cell phosphoproteome.</title>
        <authorList>
            <person name="Zhou H."/>
            <person name="Di Palma S."/>
            <person name="Preisinger C."/>
            <person name="Peng M."/>
            <person name="Polat A.N."/>
            <person name="Heck A.J."/>
            <person name="Mohammed S."/>
        </authorList>
    </citation>
    <scope>PHOSPHORYLATION [LARGE SCALE ANALYSIS] AT SER-414</scope>
    <scope>IDENTIFICATION BY MASS SPECTROMETRY [LARGE SCALE ANALYSIS]</scope>
    <source>
        <tissue>Erythroleukemia</tissue>
    </source>
</reference>
<reference key="20">
    <citation type="journal article" date="2013" name="J. Cell Biol.">
        <title>Rag GTPases mediate amino acid-dependent recruitment of TFEB and MITF to lysosomes.</title>
        <authorList>
            <person name="Martina J.A."/>
            <person name="Puertollano R."/>
        </authorList>
    </citation>
    <scope>SUBCELLULAR LOCATION</scope>
    <scope>INTERACTION WITH SMALL GTPASES RAG</scope>
</reference>
<reference key="21">
    <citation type="journal article" date="2016" name="Am. J. Hum. Genet.">
        <title>Biallelic mutations in MITF cause coloboma, osteopetrosis, microphthalmia, macrocephaly, albinism, and deafness.</title>
        <authorList>
            <person name="George A."/>
            <person name="Zand D.J."/>
            <person name="Hufnagel R.B."/>
            <person name="Sharma R."/>
            <person name="Sergeev Y.V."/>
            <person name="Legare J.M."/>
            <person name="Rice G.M."/>
            <person name="Scott Schwoerer J.A."/>
            <person name="Rius M."/>
            <person name="Tetri L."/>
            <person name="Gamm D.M."/>
            <person name="Bharti K."/>
            <person name="Brooks B.P."/>
        </authorList>
    </citation>
    <scope>FUNCTION</scope>
    <scope>SUBCELLULAR LOCATION</scope>
    <scope>INVOLVEMENT IN COMMAD</scope>
    <scope>VARIANTS COMMAD ASN-313; ARG-324 DEL AND GLY-324</scope>
    <scope>CHARACTERIZATION OF VARIANTS COMMAD ASN-313 AND ARG-324 DEL</scope>
</reference>
<reference key="22">
    <citation type="journal article" date="2018" name="J. Invest. Dermatol.">
        <title>Melanocytes Sense Blue Light and Regulate Pigmentation through Opsin-3.</title>
        <authorList>
            <person name="Regazzetti C."/>
            <person name="Sormani L."/>
            <person name="Debayle D."/>
            <person name="Bernerd F."/>
            <person name="Tulic M.K."/>
            <person name="De Donatis G.M."/>
            <person name="Chignon-Sicard B."/>
            <person name="Rocchi S."/>
            <person name="Passeron T."/>
        </authorList>
    </citation>
    <scope>SUBCELLULAR LOCATION</scope>
    <scope>TISSUE SPECIFICITY</scope>
    <scope>PHOSPHORYLATION</scope>
</reference>
<reference key="23">
    <citation type="journal article" date="2016" name="J. Clin. Endocrinol. Metab.">
        <title>The MITF, p.E318K Variant, as a Risk Factor for Pheochromocytoma and Paraganglioma.</title>
        <authorList>
            <person name="Castro-Vega L.J."/>
            <person name="Kiando S.R."/>
            <person name="Burnichon N."/>
            <person name="Buffet A."/>
            <person name="Amar L."/>
            <person name="Simian C."/>
            <person name="Berdelou A."/>
            <person name="Galan P."/>
            <person name="Schlumberger M."/>
            <person name="Bouatia-Naji N."/>
            <person name="Favier J."/>
            <person name="Bressac-de Paillerets B."/>
            <person name="Gimenez-Roqueplo A.P."/>
        </authorList>
    </citation>
    <scope>INVOLVEMENT IN DISEASE</scope>
    <scope>VARIANT LYS-425</scope>
</reference>
<reference key="24">
    <citation type="journal article" date="2023" name="Mol. Cell">
        <title>A central role for regulated protein stability in the control of TFE3 and MITF by nutrients.</title>
        <authorList>
            <person name="Nardone C."/>
            <person name="Palanski B.A."/>
            <person name="Scott D.C."/>
            <person name="Timms R.T."/>
            <person name="Barber K.W."/>
            <person name="Gu X."/>
            <person name="Mao A."/>
            <person name="Leng Y."/>
            <person name="Watson E.V."/>
            <person name="Schulman B.A."/>
            <person name="Cole P.A."/>
            <person name="Elledge S.J."/>
        </authorList>
    </citation>
    <scope>FUNCTION</scope>
    <scope>SUBCELLULAR LOCATION</scope>
    <scope>PHOSPHORYLATION AT SER-5 AND SER-280</scope>
    <scope>UBIQUITINATION</scope>
    <scope>MUTAGENESIS OF SER-5</scope>
</reference>
<reference key="25">
    <citation type="journal article" date="2014" name="J. Struct. Biol.">
        <title>Improving coiled coil stability while maintaining specificity by a bacterial hitchhiker selection system.</title>
        <authorList>
            <person name="Kukenshoner T."/>
            <person name="Wohlwend D."/>
            <person name="Niemoller C."/>
            <person name="Dondapati P."/>
            <person name="Speck J."/>
            <person name="Adeniran A.V."/>
            <person name="Nieth A."/>
            <person name="Gerhardt S."/>
            <person name="Einsle O."/>
            <person name="Muller K.M."/>
            <person name="Arndt K.M."/>
        </authorList>
    </citation>
    <scope>X-RAY CRYSTALLOGRAPHY (2.10 ANGSTROMS) OF 357-403</scope>
    <scope>SUBUNIT</scope>
    <scope>COILED COIL</scope>
</reference>
<reference key="26">
    <citation type="journal article" date="1995" name="Hum. Mol. Genet.">
        <title>The mutational spectrum in Waardenburg syndrome.</title>
        <authorList>
            <person name="Tassabehji M."/>
            <person name="Newton V.E."/>
            <person name="Liu X.-Z."/>
            <person name="Brady A."/>
            <person name="Donnai D."/>
            <person name="Krajewska-Walasek M."/>
            <person name="Murday V."/>
            <person name="Norman A."/>
            <person name="Obersztyn E."/>
            <person name="Reardon W."/>
            <person name="Rice J.C."/>
            <person name="Trembath R."/>
            <person name="Wieacker P."/>
            <person name="Whiteford M."/>
            <person name="Winter R."/>
            <person name="Read A.P."/>
        </authorList>
    </citation>
    <scope>VARIANTS WS2A LYS-310; ARG-324 DEL; PRO-357; ASP-385 AND PRO-405</scope>
</reference>
<reference key="27">
    <citation type="journal article" date="2000" name="J. Med. Genet.">
        <title>Tietz syndrome (hypopigmentation/deafness) caused by mutation of MITF.</title>
        <authorList>
            <person name="Smith S.D."/>
            <person name="Kelley P.M."/>
            <person name="Kenyon J.B."/>
            <person name="Hoover D."/>
        </authorList>
    </citation>
    <scope>VARIANT TADS LYS-317</scope>
    <source>
        <tissue>Blood</tissue>
    </source>
</reference>
<reference key="28">
    <citation type="journal article" date="2011" name="Nature">
        <title>A SUMOylation-defective MITF germline mutation predisposes to melanoma and renal carcinoma.</title>
        <authorList>
            <person name="Bertolotto C."/>
            <person name="Lesueur F."/>
            <person name="Giuliano S."/>
            <person name="Strub T."/>
            <person name="de Lichy M."/>
            <person name="Bille K."/>
            <person name="Dessen P."/>
            <person name="d'Hayer B."/>
            <person name="Mohamdi H."/>
            <person name="Remenieras A."/>
            <person name="Maubec E."/>
            <person name="de la Fouchardiere A."/>
            <person name="Molinie V."/>
            <person name="Vabres P."/>
            <person name="Dalle S."/>
            <person name="Poulalhon N."/>
            <person name="Martin-Denavit T."/>
            <person name="Thomas L."/>
            <person name="Andry-Benzaquen P."/>
            <person name="Dupin N."/>
            <person name="Boitier F."/>
            <person name="Rossi A."/>
            <person name="Perrot J.L."/>
            <person name="Labeille B."/>
            <person name="Robert C."/>
            <person name="Escudier B."/>
            <person name="Caron O."/>
            <person name="Brugieres L."/>
            <person name="Saule S."/>
            <person name="Gardie B."/>
            <person name="Gad S."/>
            <person name="Richard S."/>
            <person name="Couturier J."/>
            <person name="Teh B.T."/>
            <person name="Ghiorzo P."/>
            <person name="Pastorino L."/>
            <person name="Puig S."/>
            <person name="Badenas C."/>
            <person name="Olsson H."/>
            <person name="Ingvar C."/>
            <person name="Rouleau E."/>
            <person name="Lidereau R."/>
            <person name="Bahadoran P."/>
            <person name="Vielh P."/>
            <person name="Corda E."/>
            <person name="Blanche H."/>
            <person name="Zelenika D."/>
            <person name="Galan P."/>
            <person name="Aubin F."/>
            <person name="Bachollet B."/>
            <person name="Becuwe C."/>
            <person name="Berthet P."/>
            <person name="Bignon Y.J."/>
            <person name="Bonadona V."/>
            <person name="Bonafe J.L."/>
            <person name="Bonnet-Dupeyron M.N."/>
            <person name="Cambazard F."/>
            <person name="Chevrant-Breton J."/>
            <person name="Coupier I."/>
            <person name="Dalac S."/>
            <person name="Demange L."/>
            <person name="d'Incan M."/>
            <person name="Dugast C."/>
            <person name="Faivre L."/>
            <person name="Vincent-Fetita L."/>
            <person name="Gauthier-Villars M."/>
            <person name="Gilbert B."/>
            <person name="Grange F."/>
            <person name="Grob J.J."/>
            <person name="Humbert P."/>
            <person name="Janin N."/>
            <person name="Joly P."/>
            <person name="Kerob D."/>
            <person name="Lasset C."/>
            <person name="Leroux D."/>
            <person name="Levang J."/>
            <person name="Limacher J.M."/>
            <person name="Livideanu C."/>
            <person name="Longy M."/>
            <person name="Lortholary A."/>
            <person name="Stoppa-Lyonnet D."/>
            <person name="Mansard S."/>
            <person name="Mansuy L."/>
            <person name="Marrou K."/>
            <person name="Mateus C."/>
            <person name="Maugard C."/>
            <person name="Meyer N."/>
            <person name="Nogues C."/>
            <person name="Souteyrand P."/>
            <person name="Venat-Bouvet L."/>
            <person name="Zattara H."/>
            <person name="Chaudru V."/>
            <person name="Lenoir G.M."/>
            <person name="Lathrop M."/>
            <person name="Davidson I."/>
            <person name="Avril M.F."/>
            <person name="Demenais F."/>
            <person name="Ballotti R."/>
            <person name="Bressac-de Paillerets B."/>
        </authorList>
    </citation>
    <scope>INVOLVEMENT IN CMM8</scope>
    <scope>VARIANT CMM8 LYS-425</scope>
</reference>
<reference key="29">
    <citation type="journal article" date="2011" name="Nature">
        <title>A novel recurrent mutation in MITF predisposes to familial and sporadic melanoma.</title>
        <authorList>
            <person name="Yokoyama S."/>
            <person name="Woods S.L."/>
            <person name="Boyle G.M."/>
            <person name="Aoude L.G."/>
            <person name="MacGregor S."/>
            <person name="Zismann V."/>
            <person name="Gartside M."/>
            <person name="Cust A.E."/>
            <person name="Haq R."/>
            <person name="Harland M."/>
            <person name="Taylor J.C."/>
            <person name="Duffy D.L."/>
            <person name="Holohan K."/>
            <person name="Dutton-Regester K."/>
            <person name="Palmer J.M."/>
            <person name="Bonazzi V."/>
            <person name="Stark M.S."/>
            <person name="Symmons J."/>
            <person name="Law M.H."/>
            <person name="Schmidt C."/>
            <person name="Lanagan C."/>
            <person name="O'Connor L."/>
            <person name="Holland E.A."/>
            <person name="Schmid H."/>
            <person name="Maskiell J.A."/>
            <person name="Jetann J."/>
            <person name="Ferguson M."/>
            <person name="Jenkins M.A."/>
            <person name="Kefford R.F."/>
            <person name="Giles G.G."/>
            <person name="Armstrong B.K."/>
            <person name="Aitken J.F."/>
            <person name="Hopper J.L."/>
            <person name="Whiteman D.C."/>
            <person name="Pharoah P.D."/>
            <person name="Easton D.F."/>
            <person name="Dunning A.M."/>
            <person name="Newton-Bishop J.A."/>
            <person name="Montgomery G.W."/>
            <person name="Martin N.G."/>
            <person name="Mann G.J."/>
            <person name="Bishop D.T."/>
            <person name="Tsao H."/>
            <person name="Trent J.M."/>
            <person name="Fisher D.E."/>
            <person name="Hayward N.K."/>
            <person name="Brown K.M."/>
        </authorList>
    </citation>
    <scope>INVOLVEMENT IN CMM8</scope>
    <scope>VARIANT CMM8 LYS-425</scope>
    <scope>CHARACTERIZATION OF VARIANT CMM8 LYS-425</scope>
</reference>
<reference key="30">
    <citation type="journal article" date="2017" name="Hum. Mutat.">
        <title>EDNRB mutations cause Waardenburg syndrome type II in the heterozygous state.</title>
        <authorList>
            <person name="Issa S."/>
            <person name="Bondurand N."/>
            <person name="Faubert E."/>
            <person name="Poisson S."/>
            <person name="Lecerf L."/>
            <person name="Nitschke P."/>
            <person name="Deggouj N."/>
            <person name="Loundon N."/>
            <person name="Jonard L."/>
            <person name="David A."/>
            <person name="Sznajer Y."/>
            <person name="Blanchet P."/>
            <person name="Marlin S."/>
            <person name="Pingault V."/>
        </authorList>
    </citation>
    <scope>VARIANT WS2A THR-294</scope>
</reference>
<comment type="function">
    <text evidence="5 14 18 21 23">Transcription factor that acts as a master regulator of melanocyte survival and differentiation as well as melanosome biogenesis (PubMed:10587587, PubMed:22647378, PubMed:27889061, PubMed:9647758). Binds to M-boxes (5'-TCATGTG-3') and symmetrical DNA sequences (E-boxes) (5'-CACGTG-3') found in the promoter of pigmentation genes, such as tyrosinase (TYR) (PubMed:10587587, PubMed:22647378, PubMed:27889061, PubMed:9647758). Involved in the cellular response to amino acid availability by acting downstream of MTOR: in the presence of nutrients, MITF phosphorylation by MTOR promotes its inactivation (PubMed:36608670). Upon starvation or lysosomal stress, inhibition of MTOR induces MITF dephosphorylation, resulting in transcription factor activity (PubMed:36608670). Plays an important role in melanocyte development by regulating the expression of tyrosinase (TYR) and tyrosinase-related protein 1 (TYRP1) (PubMed:10587587, PubMed:22647378, PubMed:27889061, PubMed:9647758). Plays a critical role in the differentiation of various cell types, such as neural crest-derived melanocytes, mast cells, osteoclasts and optic cup-derived retinal pigment epithelium (PubMed:10587587, PubMed:22647378, PubMed:27889061, PubMed:9647758).</text>
</comment>
<comment type="subunit">
    <text evidence="1 8 9 14 15 16 21">Homodimer or heterodimer; dimerization is mediated via the coiled coil region (PubMed:24631970). Efficient DNA binding requires dimerization with another bHLH protein (PubMed:14975237). Binds DNA in the form of homodimer or heterodimer with either TFE3, TFEB or TFEC (PubMed:15507434). Interacts with small GTPases Rag (RagA/RRAGA, RagB/RRAGB, RagC/RRAGC and/or RagD/RRAGD); promoting its recruitment to lysosomal membrane in the presence of nutrients (PubMed:23401004, PubMed:36608670). Interacts with KARS1 (PubMed:14975237). Identified in a complex with HINT1 and CTNNB1 (PubMed:22647378). Interacts with VSX2 (By similarity).</text>
</comment>
<comment type="interaction">
    <interactant intactId="EBI-3910192">
        <id>O75030</id>
    </interactant>
    <interactant intactId="EBI-80140">
        <id>P63165</id>
        <label>SUMO1</label>
    </interactant>
    <organismsDiffer>false</organismsDiffer>
    <experiments>2</experiments>
</comment>
<comment type="interaction">
    <interactant intactId="EBI-3910192">
        <id>O75030</id>
    </interactant>
    <interactant intactId="EBI-1048957">
        <id>P19532</id>
        <label>TFE3</label>
    </interactant>
    <organismsDiffer>false</organismsDiffer>
    <experiments>2</experiments>
</comment>
<comment type="interaction">
    <interactant intactId="EBI-3910192">
        <id>O75030</id>
    </interactant>
    <interactant intactId="EBI-2814208">
        <id>P19484</id>
        <label>TFEB</label>
    </interactant>
    <organismsDiffer>false</organismsDiffer>
    <experiments>3</experiments>
</comment>
<comment type="subcellular location">
    <subcellularLocation>
        <location evidence="10 18 20 21">Nucleus</location>
    </subcellularLocation>
    <subcellularLocation>
        <location evidence="10 20 21">Cytoplasm</location>
    </subcellularLocation>
    <subcellularLocation>
        <location evidence="15 21">Lysosome membrane</location>
    </subcellularLocation>
    <text evidence="10 15 21">When nutrients are present, recruited to the lysosomal membrane via association with GDP-bound RagC/RRAGC (or RagD/RRAGD): it is then phosphorylated by MTOR (PubMed:23401004, PubMed:36608670). Phosphorylation by MTOR promotes ubiquitination and degradation (PubMed:36608670). Conversely, inhibition of mTORC1, starvation and lysosomal disruption, promotes dephosphorylation and translocation to the nucleus (PubMed:36608670). Phosphorylation by MARK3/cTAK1 promotes association with 14-3-3/YWHA adapters and retention in the cytosol (PubMed:16822840).</text>
</comment>
<comment type="alternative products">
    <event type="alternative splicing"/>
    <isoform>
        <id>O75030-1</id>
        <name>A1</name>
        <sequence type="displayed"/>
    </isoform>
    <isoform>
        <id>O75030-2</id>
        <name>A2</name>
        <sequence type="described" ref="VSP_002128"/>
    </isoform>
    <isoform>
        <id>O75030-3</id>
        <name>B1</name>
        <sequence type="described" ref="VSP_002124"/>
    </isoform>
    <isoform>
        <id>O75030-4</id>
        <name>B2</name>
        <sequence type="described" ref="VSP_002124 VSP_002128"/>
    </isoform>
    <isoform>
        <id>O75030-5</id>
        <name>C1</name>
        <sequence type="described" ref="VSP_002125"/>
    </isoform>
    <isoform>
        <id>O75030-6</id>
        <name>C2</name>
        <sequence type="described" ref="VSP_002125 VSP_002128"/>
    </isoform>
    <isoform>
        <id>O75030-7</id>
        <name>H1</name>
        <sequence type="described" ref="VSP_002126"/>
    </isoform>
    <isoform>
        <id>O75030-8</id>
        <name>H2</name>
        <sequence type="described" ref="VSP_002126 VSP_002128"/>
    </isoform>
    <isoform>
        <id>O75030-9</id>
        <name>M1</name>
        <sequence type="described" ref="VSP_002127"/>
    </isoform>
    <isoform>
        <id>O75030-10</id>
        <name>M2</name>
        <sequence type="described" ref="VSP_002127 VSP_002128"/>
    </isoform>
    <isoform>
        <id>O75030-11</id>
        <name>Mdel</name>
        <sequence type="described" ref="VSP_002127 VSP_045178 VSP_045179"/>
    </isoform>
    <isoform>
        <id>O75030-12</id>
        <name>12</name>
        <sequence type="described" ref="VSP_046438 VSP_045179"/>
    </isoform>
    <text>The X2-type isoforms differ from the X1-type isoforms by the absence of a 6 residue insert.</text>
</comment>
<comment type="tissue specificity">
    <text evidence="20">Expressed in melanocytes (at protein level).</text>
</comment>
<comment type="tissue specificity">
    <molecule>Isoform A2</molecule>
    <text evidence="4 23">Expressed in the retinal pigment epithelium, brain, and placenta (PubMed:9647758). Expressed in the kidney (PubMed:10578055, PubMed:9647758).</text>
</comment>
<comment type="tissue specificity">
    <molecule>Isoform C2</molecule>
    <text evidence="4">Expressed in the kidney and retinal pigment epithelium.</text>
</comment>
<comment type="tissue specificity">
    <molecule>Isoform H1</molecule>
    <text evidence="4 23">Expressed in the kidney.</text>
</comment>
<comment type="tissue specificity">
    <molecule>Isoform H2</molecule>
    <text evidence="4 23">Expressed in the kidney.</text>
</comment>
<comment type="tissue specificity">
    <molecule>Isoform M1</molecule>
    <text evidence="11">Expressed in melanocytes.</text>
</comment>
<comment type="tissue specificity">
    <molecule>Isoform Mdel</molecule>
    <text evidence="11">Expressed in melanocytes.</text>
</comment>
<comment type="domain">
    <text evidence="31">The leucine zipper region is part of a larger coiled coil.</text>
</comment>
<comment type="PTM">
    <text evidence="5 6 10 20 21">When nutrients are present, phosphorylation by MTOR at Ser-5 via non-canonical mTORC1 pathway promotes ubiquitination by the SCF(BTRC) complex, followed by degradation (PubMed:36608670). Phosphorylation at Ser-405 significantly enhances the ability to bind the tyrosinase promoter (PubMed:10587587). Phosphorylation by MARK3/cTAK1 at Ser-280 promotes association with 14-3-3/YWHA adapters and retention in the cytosol (PubMed:16822840). Phosphorylated at Ser-180 and Ser-516 following KIT signaling, triggering a short live activation: Phosphorylation at Ser-180 and Ser-516 by MAPK and RPS6KA1, respectively, activate the transcription factor activity but also promote ubiquitination and subsequent degradation by the proteasome (PubMed:10673502). Phosphorylated in response to blue light (415nm) (PubMed:28842328).</text>
</comment>
<comment type="PTM">
    <text evidence="6 21">Ubiquitinated by the SCF(BTRC) and SCF(FBXW11) complexes following phosphorylation ar Ser-5 by MTOR, leading to its degradation by the proteasome (PubMed:36608670). Ubiquitinated following phosphorylation at Ser-180, leading to subsequent degradation by the proteasome (PubMed:10673502). Deubiquitinated by USP13, preventing its degradation (PubMed:10673502).</text>
</comment>
<comment type="disease" evidence="19 22 23">
    <disease id="DI-01135">
        <name>Waardenburg syndrome 2A</name>
        <acronym>WS2A</acronym>
        <description>WS2 is a genetically heterogeneous, autosomal dominant disorder characterized by sensorineural deafness, pigmentary disturbances, and absence of dystopia canthorum. The frequency of deafness is higher in WS2 than in WS1.</description>
        <dbReference type="MIM" id="193510"/>
    </disease>
    <text>The disease is caused by variants affecting the gene represented in this entry.</text>
</comment>
<comment type="disease" evidence="7">
    <disease id="DI-02369">
        <name>Tietz albinism-deafness syndrome</name>
        <acronym>TADS</acronym>
        <description>An autosomal dominant disorder characterized by generalized hypopigmentation and congenital, bilateral, profound sensorineural deafness.</description>
        <dbReference type="MIM" id="103500"/>
    </disease>
    <text>The disease is caused by variants affecting the gene represented in this entry.</text>
</comment>
<comment type="disease" evidence="12 13">
    <disease id="DI-03341">
        <name>Melanoma, cutaneous malignant 8</name>
        <acronym>CMM8</acronym>
        <description>A malignant neoplasm of melanocytes, arising de novo or from a pre-existing benign nevus, which occurs most often in the skin but may also involve other sites.</description>
        <dbReference type="MIM" id="614456"/>
    </disease>
    <text>Disease susceptibility is associated with variants affecting the gene represented in this entry.</text>
</comment>
<comment type="disease" evidence="18">
    <disease id="DI-04925">
        <name>Coloboma, osteopetrosis, microphthalmia, macrocephaly, albinism, and deafness</name>
        <acronym>COMMAD</acronym>
        <description>An autosomal recessive syndrome characterized by severe microphthalmia, profound congenital sensorineural hearing loss, lack of pigment in the hair, skin, and eyes, macrocephaly, facial dysmorphism, and osteopetrosis.</description>
        <dbReference type="MIM" id="617306"/>
    </disease>
    <text evidence="18">The disease is caused by variants affecting the gene represented in this entry. An allelic combination involving at least one dominant-negative mutation, inherited in a recessive manner, represents the underlying molecular mechanism leading to COMMAD syndrome.</text>
</comment>
<comment type="disease">
    <text evidence="17">Variations affecting this gene are associated with susceptibility to pheochromocytomas and paragangliomas, rare neural crest-derived tumors with an approximate incidence of 1:300,000/year.</text>
</comment>
<comment type="similarity">
    <text evidence="30">Belongs to the MiT/TFE family.</text>
</comment>